<name>YQGG_ECOLI</name>
<sequence length="47" mass="5220">MNRCLLLNLSHRSGEDSFPALCISALHTCRCYTHLGASQDSRAGYSY</sequence>
<proteinExistence type="evidence at protein level"/>
<organism>
    <name type="scientific">Escherichia coli (strain K12)</name>
    <dbReference type="NCBI Taxonomy" id="83333"/>
    <lineage>
        <taxon>Bacteria</taxon>
        <taxon>Pseudomonadati</taxon>
        <taxon>Pseudomonadota</taxon>
        <taxon>Gammaproteobacteria</taxon>
        <taxon>Enterobacterales</taxon>
        <taxon>Enterobacteriaceae</taxon>
        <taxon>Escherichia</taxon>
    </lineage>
</organism>
<reference key="1">
    <citation type="journal article" date="1997" name="Science">
        <title>The complete genome sequence of Escherichia coli K-12.</title>
        <authorList>
            <person name="Blattner F.R."/>
            <person name="Plunkett G. III"/>
            <person name="Bloch C.A."/>
            <person name="Perna N.T."/>
            <person name="Burland V."/>
            <person name="Riley M."/>
            <person name="Collado-Vides J."/>
            <person name="Glasner J.D."/>
            <person name="Rode C.K."/>
            <person name="Mayhew G.F."/>
            <person name="Gregor J."/>
            <person name="Davis N.W."/>
            <person name="Kirkpatrick H.A."/>
            <person name="Goeden M.A."/>
            <person name="Rose D.J."/>
            <person name="Mau B."/>
            <person name="Shao Y."/>
        </authorList>
    </citation>
    <scope>NUCLEOTIDE SEQUENCE [LARGE SCALE GENOMIC DNA]</scope>
    <source>
        <strain>K12 / MG1655 / ATCC 47076</strain>
    </source>
</reference>
<reference key="2">
    <citation type="journal article" date="2019" name="MBio">
        <title>Identifying small proteins by ribosome profiling with stalled initiation complexes.</title>
        <authorList>
            <person name="Weaver J."/>
            <person name="Mohammad F."/>
            <person name="Buskirk A.R."/>
            <person name="Storz G."/>
        </authorList>
    </citation>
    <scope>IDENTIFICATION</scope>
    <scope>INDUCTION</scope>
    <source>
        <strain>K12 / MG1655 / ATCC 47076</strain>
    </source>
</reference>
<comment type="induction">
    <text evidence="1">Expressed in both exponential and stationary phase in rich medium; expression is higher in stationary phase (at protein level).</text>
</comment>
<comment type="miscellaneous">
    <text evidence="1">Encoded antisense to yqgC.</text>
</comment>
<protein>
    <recommendedName>
        <fullName evidence="2">Protein YqgG</fullName>
    </recommendedName>
</protein>
<dbReference type="EMBL" id="U00096">
    <property type="protein sequence ID" value="QNV50537.1"/>
    <property type="molecule type" value="Genomic_DNA"/>
</dbReference>
<dbReference type="InParanoid" id="P0DSG2"/>
<dbReference type="BioCyc" id="EcoCyc:MONOMER0-4496"/>
<dbReference type="Proteomes" id="UP000000625">
    <property type="component" value="Chromosome"/>
</dbReference>
<dbReference type="Pfam" id="PF23505">
    <property type="entry name" value="YqgG"/>
    <property type="match status" value="1"/>
</dbReference>
<evidence type="ECO:0000269" key="1">
    <source>
    </source>
</evidence>
<evidence type="ECO:0000303" key="2">
    <source>
    </source>
</evidence>
<evidence type="ECO:0000312" key="3">
    <source>
        <dbReference type="EMBL" id="QNV50537.1"/>
    </source>
</evidence>
<accession>P0DSG2</accession>
<accession>A0A7H2C790</accession>
<gene>
    <name evidence="2" type="primary">yqgG</name>
    <name evidence="3" type="ordered locus">b4784</name>
</gene>
<feature type="chain" id="PRO_0000447162" description="Protein YqgG">
    <location>
        <begin position="1"/>
        <end position="47"/>
    </location>
</feature>
<keyword id="KW-1185">Reference proteome</keyword>